<reference key="1">
    <citation type="journal article" date="2001" name="J. Bacteriol.">
        <title>Genome sequence and comparative analysis of the solvent-producing bacterium Clostridium acetobutylicum.</title>
        <authorList>
            <person name="Noelling J."/>
            <person name="Breton G."/>
            <person name="Omelchenko M.V."/>
            <person name="Makarova K.S."/>
            <person name="Zeng Q."/>
            <person name="Gibson R."/>
            <person name="Lee H.M."/>
            <person name="Dubois J."/>
            <person name="Qiu D."/>
            <person name="Hitti J."/>
            <person name="Wolf Y.I."/>
            <person name="Tatusov R.L."/>
            <person name="Sabathe F."/>
            <person name="Doucette-Stamm L.A."/>
            <person name="Soucaille P."/>
            <person name="Daly M.J."/>
            <person name="Bennett G.N."/>
            <person name="Koonin E.V."/>
            <person name="Smith D.R."/>
        </authorList>
    </citation>
    <scope>NUCLEOTIDE SEQUENCE [LARGE SCALE GENOMIC DNA]</scope>
    <source>
        <strain>ATCC 824 / DSM 792 / JCM 1419 / IAM 19013 / LMG 5710 / NBRC 13948 / NRRL B-527 / VKM B-1787 / 2291 / W</strain>
    </source>
</reference>
<comment type="function">
    <text evidence="1">Required for the first step of histidine biosynthesis. May allow the feedback regulation of ATP phosphoribosyltransferase activity by histidine (By similarity).</text>
</comment>
<comment type="pathway">
    <text>Amino-acid biosynthesis; L-histidine biosynthesis; L-histidine from 5-phospho-alpha-D-ribose 1-diphosphate: step 1/9.</text>
</comment>
<comment type="subunit">
    <text evidence="1">Heteromultimer composed of HisG and HisZ subunits.</text>
</comment>
<comment type="subcellular location">
    <subcellularLocation>
        <location evidence="1">Cytoplasm</location>
    </subcellularLocation>
</comment>
<comment type="miscellaneous">
    <text>This function is generally fulfilled by the C-terminal part of HisG, which is missing in some bacteria such as this one.</text>
</comment>
<comment type="similarity">
    <text evidence="2">Belongs to the class-II aminoacyl-tRNA synthetase family. HisZ subfamily.</text>
</comment>
<gene>
    <name type="primary">hisZ</name>
    <name type="ordered locus">CA_C0935</name>
</gene>
<protein>
    <recommendedName>
        <fullName>ATP phosphoribosyltransferase regulatory subunit</fullName>
    </recommendedName>
</protein>
<proteinExistence type="inferred from homology"/>
<feature type="chain" id="PRO_0000171033" description="ATP phosphoribosyltransferase regulatory subunit">
    <location>
        <begin position="1"/>
        <end position="407"/>
    </location>
</feature>
<accession>Q97KI4</accession>
<dbReference type="EMBL" id="AE001437">
    <property type="protein sequence ID" value="AAK78911.1"/>
    <property type="molecule type" value="Genomic_DNA"/>
</dbReference>
<dbReference type="PIR" id="D97015">
    <property type="entry name" value="D97015"/>
</dbReference>
<dbReference type="RefSeq" id="NP_347571.1">
    <property type="nucleotide sequence ID" value="NC_003030.1"/>
</dbReference>
<dbReference type="RefSeq" id="WP_010964253.1">
    <property type="nucleotide sequence ID" value="NC_003030.1"/>
</dbReference>
<dbReference type="SMR" id="Q97KI4"/>
<dbReference type="STRING" id="272562.CA_C0935"/>
<dbReference type="KEGG" id="cac:CA_C0935"/>
<dbReference type="PATRIC" id="fig|272562.8.peg.1145"/>
<dbReference type="eggNOG" id="COG3705">
    <property type="taxonomic scope" value="Bacteria"/>
</dbReference>
<dbReference type="HOGENOM" id="CLU_025113_0_0_9"/>
<dbReference type="OrthoDB" id="9800814at2"/>
<dbReference type="UniPathway" id="UPA00031">
    <property type="reaction ID" value="UER00006"/>
</dbReference>
<dbReference type="Proteomes" id="UP000000814">
    <property type="component" value="Chromosome"/>
</dbReference>
<dbReference type="GO" id="GO:0005737">
    <property type="term" value="C:cytoplasm"/>
    <property type="evidence" value="ECO:0007669"/>
    <property type="project" value="UniProtKB-SubCell"/>
</dbReference>
<dbReference type="GO" id="GO:0140096">
    <property type="term" value="F:catalytic activity, acting on a protein"/>
    <property type="evidence" value="ECO:0007669"/>
    <property type="project" value="UniProtKB-ARBA"/>
</dbReference>
<dbReference type="GO" id="GO:0004821">
    <property type="term" value="F:histidine-tRNA ligase activity"/>
    <property type="evidence" value="ECO:0007669"/>
    <property type="project" value="TreeGrafter"/>
</dbReference>
<dbReference type="GO" id="GO:0016740">
    <property type="term" value="F:transferase activity"/>
    <property type="evidence" value="ECO:0007669"/>
    <property type="project" value="UniProtKB-ARBA"/>
</dbReference>
<dbReference type="GO" id="GO:0006427">
    <property type="term" value="P:histidyl-tRNA aminoacylation"/>
    <property type="evidence" value="ECO:0007669"/>
    <property type="project" value="TreeGrafter"/>
</dbReference>
<dbReference type="GO" id="GO:0000105">
    <property type="term" value="P:L-histidine biosynthetic process"/>
    <property type="evidence" value="ECO:0007669"/>
    <property type="project" value="UniProtKB-UniRule"/>
</dbReference>
<dbReference type="CDD" id="cd00773">
    <property type="entry name" value="HisRS-like_core"/>
    <property type="match status" value="1"/>
</dbReference>
<dbReference type="Gene3D" id="3.30.930.10">
    <property type="entry name" value="Bira Bifunctional Protein, Domain 2"/>
    <property type="match status" value="1"/>
</dbReference>
<dbReference type="HAMAP" id="MF_00125">
    <property type="entry name" value="HisZ"/>
    <property type="match status" value="1"/>
</dbReference>
<dbReference type="InterPro" id="IPR006195">
    <property type="entry name" value="aa-tRNA-synth_II"/>
</dbReference>
<dbReference type="InterPro" id="IPR045864">
    <property type="entry name" value="aa-tRNA-synth_II/BPL/LPL"/>
</dbReference>
<dbReference type="InterPro" id="IPR041715">
    <property type="entry name" value="HisRS-like_core"/>
</dbReference>
<dbReference type="InterPro" id="IPR004516">
    <property type="entry name" value="HisRS/HisZ"/>
</dbReference>
<dbReference type="InterPro" id="IPR004517">
    <property type="entry name" value="HisZ"/>
</dbReference>
<dbReference type="NCBIfam" id="TIGR00443">
    <property type="entry name" value="hisZ_biosyn_reg"/>
    <property type="match status" value="1"/>
</dbReference>
<dbReference type="NCBIfam" id="NF008936">
    <property type="entry name" value="PRK12292.1-3"/>
    <property type="match status" value="1"/>
</dbReference>
<dbReference type="PANTHER" id="PTHR43707:SF6">
    <property type="entry name" value="ATP PHOSPHORIBOSYLTRANSFERASE REGULATORY SUBUNIT"/>
    <property type="match status" value="1"/>
</dbReference>
<dbReference type="PANTHER" id="PTHR43707">
    <property type="entry name" value="HISTIDYL-TRNA SYNTHETASE"/>
    <property type="match status" value="1"/>
</dbReference>
<dbReference type="Pfam" id="PF13393">
    <property type="entry name" value="tRNA-synt_His"/>
    <property type="match status" value="1"/>
</dbReference>
<dbReference type="PIRSF" id="PIRSF001549">
    <property type="entry name" value="His-tRNA_synth"/>
    <property type="match status" value="1"/>
</dbReference>
<dbReference type="SUPFAM" id="SSF55681">
    <property type="entry name" value="Class II aaRS and biotin synthetases"/>
    <property type="match status" value="1"/>
</dbReference>
<dbReference type="PROSITE" id="PS50862">
    <property type="entry name" value="AA_TRNA_LIGASE_II"/>
    <property type="match status" value="1"/>
</dbReference>
<organism>
    <name type="scientific">Clostridium acetobutylicum (strain ATCC 824 / DSM 792 / JCM 1419 / IAM 19013 / LMG 5710 / NBRC 13948 / NRRL B-527 / VKM B-1787 / 2291 / W)</name>
    <dbReference type="NCBI Taxonomy" id="272562"/>
    <lineage>
        <taxon>Bacteria</taxon>
        <taxon>Bacillati</taxon>
        <taxon>Bacillota</taxon>
        <taxon>Clostridia</taxon>
        <taxon>Eubacteriales</taxon>
        <taxon>Clostridiaceae</taxon>
        <taxon>Clostridium</taxon>
    </lineage>
</organism>
<keyword id="KW-0028">Amino-acid biosynthesis</keyword>
<keyword id="KW-0963">Cytoplasm</keyword>
<keyword id="KW-0368">Histidine biosynthesis</keyword>
<keyword id="KW-1185">Reference proteome</keyword>
<name>HISZ_CLOAB</name>
<sequence length="407" mass="46248">MINLKKYIPEGSRDILFEECTIKNNIENILRNSYINVGYEEVRSPTLEFYDVYNLENQPISQEKMYKLFDNTGRILVLRPDMTTPIARICATKLKNRVYPLKLSYTGNIYRMNKALNGKISEITQSGIEILGFSSLKADAEVIITAIKAILKTGLKNFKIEIGQVEFFKSIISDTALKEQDTEKLRNFIENKNFSKVEEFILRNSDLIGETSSKVLMNLPNLFGGKEVIEKAEQLTSNKQAIEALKKVRDLYDIVKRAGFGEYILIDLGMVQHINYYTGLIFRGYAHGIGDDLLSGGRYDKLLGQFGYDIPATGLAINVDNLVAALDDCVRENLYSRDRYVVFASSCNIEKAYEAVSKLNSEGKRAEVSLFDNIEETKKYCIENKISKIFNADTGKTIVEENYYGQK</sequence>
<evidence type="ECO:0000250" key="1"/>
<evidence type="ECO:0000305" key="2"/>